<protein>
    <recommendedName>
        <fullName evidence="1">Probable cytosol aminopeptidase</fullName>
        <ecNumber evidence="1">3.4.11.1</ecNumber>
    </recommendedName>
    <alternativeName>
        <fullName evidence="1">Leucine aminopeptidase</fullName>
        <shortName evidence="1">LAP</shortName>
        <ecNumber evidence="1">3.4.11.10</ecNumber>
    </alternativeName>
    <alternativeName>
        <fullName evidence="1">Leucyl aminopeptidase</fullName>
    </alternativeName>
</protein>
<gene>
    <name evidence="1" type="primary">pepA</name>
    <name type="ordered locus">STM4477</name>
</gene>
<dbReference type="EC" id="3.4.11.1" evidence="1"/>
<dbReference type="EC" id="3.4.11.10" evidence="1"/>
<dbReference type="EMBL" id="AE006468">
    <property type="protein sequence ID" value="AAL23296.1"/>
    <property type="molecule type" value="Genomic_DNA"/>
</dbReference>
<dbReference type="RefSeq" id="NP_463337.1">
    <property type="nucleotide sequence ID" value="NC_003197.2"/>
</dbReference>
<dbReference type="RefSeq" id="WP_000397158.1">
    <property type="nucleotide sequence ID" value="NC_003197.2"/>
</dbReference>
<dbReference type="SMR" id="Q8ZK29"/>
<dbReference type="STRING" id="99287.STM4477"/>
<dbReference type="MEROPS" id="M17.003"/>
<dbReference type="PaxDb" id="99287-STM4477"/>
<dbReference type="GeneID" id="1256003"/>
<dbReference type="KEGG" id="stm:STM4477"/>
<dbReference type="PATRIC" id="fig|99287.12.peg.4713"/>
<dbReference type="HOGENOM" id="CLU_013734_2_2_6"/>
<dbReference type="OMA" id="WPMPLPE"/>
<dbReference type="PhylomeDB" id="Q8ZK29"/>
<dbReference type="BioCyc" id="SENT99287:STM4477-MONOMER"/>
<dbReference type="Proteomes" id="UP000001014">
    <property type="component" value="Chromosome"/>
</dbReference>
<dbReference type="GO" id="GO:0005737">
    <property type="term" value="C:cytoplasm"/>
    <property type="evidence" value="ECO:0000318"/>
    <property type="project" value="GO_Central"/>
</dbReference>
<dbReference type="GO" id="GO:0004177">
    <property type="term" value="F:aminopeptidase activity"/>
    <property type="evidence" value="ECO:0000318"/>
    <property type="project" value="GO_Central"/>
</dbReference>
<dbReference type="GO" id="GO:0030145">
    <property type="term" value="F:manganese ion binding"/>
    <property type="evidence" value="ECO:0007669"/>
    <property type="project" value="UniProtKB-UniRule"/>
</dbReference>
<dbReference type="GO" id="GO:0070006">
    <property type="term" value="F:metalloaminopeptidase activity"/>
    <property type="evidence" value="ECO:0007669"/>
    <property type="project" value="InterPro"/>
</dbReference>
<dbReference type="GO" id="GO:0006508">
    <property type="term" value="P:proteolysis"/>
    <property type="evidence" value="ECO:0000318"/>
    <property type="project" value="GO_Central"/>
</dbReference>
<dbReference type="CDD" id="cd00433">
    <property type="entry name" value="Peptidase_M17"/>
    <property type="match status" value="1"/>
</dbReference>
<dbReference type="FunFam" id="3.40.220.10:FF:000001">
    <property type="entry name" value="Probable cytosol aminopeptidase"/>
    <property type="match status" value="1"/>
</dbReference>
<dbReference type="FunFam" id="3.40.630.10:FF:000004">
    <property type="entry name" value="Probable cytosol aminopeptidase"/>
    <property type="match status" value="1"/>
</dbReference>
<dbReference type="Gene3D" id="3.40.220.10">
    <property type="entry name" value="Leucine Aminopeptidase, subunit E, domain 1"/>
    <property type="match status" value="1"/>
</dbReference>
<dbReference type="Gene3D" id="3.40.630.10">
    <property type="entry name" value="Zn peptidases"/>
    <property type="match status" value="1"/>
</dbReference>
<dbReference type="HAMAP" id="MF_00181">
    <property type="entry name" value="Cytosol_peptidase_M17"/>
    <property type="match status" value="1"/>
</dbReference>
<dbReference type="InterPro" id="IPR011356">
    <property type="entry name" value="Leucine_aapep/pepB"/>
</dbReference>
<dbReference type="InterPro" id="IPR043472">
    <property type="entry name" value="Macro_dom-like"/>
</dbReference>
<dbReference type="InterPro" id="IPR000819">
    <property type="entry name" value="Peptidase_M17_C"/>
</dbReference>
<dbReference type="InterPro" id="IPR023042">
    <property type="entry name" value="Peptidase_M17_leu_NH2_pept"/>
</dbReference>
<dbReference type="InterPro" id="IPR008283">
    <property type="entry name" value="Peptidase_M17_N"/>
</dbReference>
<dbReference type="NCBIfam" id="NF002072">
    <property type="entry name" value="PRK00913.1-1"/>
    <property type="match status" value="1"/>
</dbReference>
<dbReference type="NCBIfam" id="NF002073">
    <property type="entry name" value="PRK00913.1-2"/>
    <property type="match status" value="1"/>
</dbReference>
<dbReference type="NCBIfam" id="NF002074">
    <property type="entry name" value="PRK00913.1-4"/>
    <property type="match status" value="1"/>
</dbReference>
<dbReference type="PANTHER" id="PTHR11963:SF23">
    <property type="entry name" value="CYTOSOL AMINOPEPTIDASE"/>
    <property type="match status" value="1"/>
</dbReference>
<dbReference type="PANTHER" id="PTHR11963">
    <property type="entry name" value="LEUCINE AMINOPEPTIDASE-RELATED"/>
    <property type="match status" value="1"/>
</dbReference>
<dbReference type="Pfam" id="PF00883">
    <property type="entry name" value="Peptidase_M17"/>
    <property type="match status" value="1"/>
</dbReference>
<dbReference type="Pfam" id="PF02789">
    <property type="entry name" value="Peptidase_M17_N"/>
    <property type="match status" value="1"/>
</dbReference>
<dbReference type="PRINTS" id="PR00481">
    <property type="entry name" value="LAMNOPPTDASE"/>
</dbReference>
<dbReference type="SUPFAM" id="SSF52949">
    <property type="entry name" value="Macro domain-like"/>
    <property type="match status" value="1"/>
</dbReference>
<dbReference type="SUPFAM" id="SSF53187">
    <property type="entry name" value="Zn-dependent exopeptidases"/>
    <property type="match status" value="1"/>
</dbReference>
<dbReference type="PROSITE" id="PS00631">
    <property type="entry name" value="CYTOSOL_AP"/>
    <property type="match status" value="1"/>
</dbReference>
<feature type="chain" id="PRO_0000165795" description="Probable cytosol aminopeptidase">
    <location>
        <begin position="1"/>
        <end position="503"/>
    </location>
</feature>
<feature type="active site" evidence="1">
    <location>
        <position position="282"/>
    </location>
</feature>
<feature type="active site" evidence="1">
    <location>
        <position position="356"/>
    </location>
</feature>
<feature type="binding site" evidence="1">
    <location>
        <position position="270"/>
    </location>
    <ligand>
        <name>Mn(2+)</name>
        <dbReference type="ChEBI" id="CHEBI:29035"/>
        <label>2</label>
    </ligand>
</feature>
<feature type="binding site" evidence="1">
    <location>
        <position position="275"/>
    </location>
    <ligand>
        <name>Mn(2+)</name>
        <dbReference type="ChEBI" id="CHEBI:29035"/>
        <label>1</label>
    </ligand>
</feature>
<feature type="binding site" evidence="1">
    <location>
        <position position="275"/>
    </location>
    <ligand>
        <name>Mn(2+)</name>
        <dbReference type="ChEBI" id="CHEBI:29035"/>
        <label>2</label>
    </ligand>
</feature>
<feature type="binding site" evidence="1">
    <location>
        <position position="293"/>
    </location>
    <ligand>
        <name>Mn(2+)</name>
        <dbReference type="ChEBI" id="CHEBI:29035"/>
        <label>2</label>
    </ligand>
</feature>
<feature type="binding site" evidence="1">
    <location>
        <position position="352"/>
    </location>
    <ligand>
        <name>Mn(2+)</name>
        <dbReference type="ChEBI" id="CHEBI:29035"/>
        <label>1</label>
    </ligand>
</feature>
<feature type="binding site" evidence="1">
    <location>
        <position position="354"/>
    </location>
    <ligand>
        <name>Mn(2+)</name>
        <dbReference type="ChEBI" id="CHEBI:29035"/>
        <label>1</label>
    </ligand>
</feature>
<feature type="binding site" evidence="1">
    <location>
        <position position="354"/>
    </location>
    <ligand>
        <name>Mn(2+)</name>
        <dbReference type="ChEBI" id="CHEBI:29035"/>
        <label>2</label>
    </ligand>
</feature>
<comment type="function">
    <text evidence="1">Presumably involved in the processing and regular turnover of intracellular proteins. Catalyzes the removal of unsubstituted N-terminal amino acids from various peptides.</text>
</comment>
<comment type="catalytic activity">
    <reaction evidence="1">
        <text>Release of an N-terminal amino acid, Xaa-|-Yaa-, in which Xaa is preferably Leu, but may be other amino acids including Pro although not Arg or Lys, and Yaa may be Pro. Amino acid amides and methyl esters are also readily hydrolyzed, but rates on arylamides are exceedingly low.</text>
        <dbReference type="EC" id="3.4.11.1"/>
    </reaction>
</comment>
<comment type="catalytic activity">
    <reaction evidence="1">
        <text>Release of an N-terminal amino acid, preferentially leucine, but not glutamic or aspartic acids.</text>
        <dbReference type="EC" id="3.4.11.10"/>
    </reaction>
</comment>
<comment type="cofactor">
    <cofactor evidence="1">
        <name>Mn(2+)</name>
        <dbReference type="ChEBI" id="CHEBI:29035"/>
    </cofactor>
    <text evidence="1">Binds 2 manganese ions per subunit.</text>
</comment>
<comment type="subcellular location">
    <subcellularLocation>
        <location evidence="1">Cytoplasm</location>
    </subcellularLocation>
</comment>
<comment type="similarity">
    <text evidence="1">Belongs to the peptidase M17 family.</text>
</comment>
<accession>Q8ZK29</accession>
<proteinExistence type="inferred from homology"/>
<name>AMPA_SALTY</name>
<keyword id="KW-0031">Aminopeptidase</keyword>
<keyword id="KW-0963">Cytoplasm</keyword>
<keyword id="KW-0378">Hydrolase</keyword>
<keyword id="KW-0464">Manganese</keyword>
<keyword id="KW-0479">Metal-binding</keyword>
<keyword id="KW-0645">Protease</keyword>
<keyword id="KW-1185">Reference proteome</keyword>
<sequence>MEFSVKSGSPEKQRSACIVVGVFEPRRLSPIAEQLDKISDGYISALLRRGELEGKPGQTLLLHHVPNVLSERILLIGCGKERELDERQYKQVIQKTINTLNDTGSMEAVCFLTELHVKGRNNYWKVRQAVETAKETLYSFDQLKTNKSEPRRPLRKMVFNVPTRRELTSGERAIQHGLAIAAGIKAAKDLGNMPPNICNAAYLASQARQLADSYSKNVITRVIGEQQMRELGMNAYLAVGHGSQNESLMSVIEYKGNPSEDARPIVLVGKGLTFDSGGISIKPSEGMDEMKYDMCGAAAVYGVMRMVAELQLPINVIGVLAGCENMPGGRAYRPGDVLTTMSGQTVEVLNTDAEGRLVLCDVLTYVERFEPEAVIDVATLTGACVIALGHHITGLMSNHNPLAHELIGASEQAGDRAWRLPLGDEFQEQLESNFADMANIGGRPGGAITAGCFLSRFTRKYNWAHLDIAGTAWRSGKAKGATGRPVALLSQFLLNRAGFNGEE</sequence>
<reference key="1">
    <citation type="journal article" date="2001" name="Nature">
        <title>Complete genome sequence of Salmonella enterica serovar Typhimurium LT2.</title>
        <authorList>
            <person name="McClelland M."/>
            <person name="Sanderson K.E."/>
            <person name="Spieth J."/>
            <person name="Clifton S.W."/>
            <person name="Latreille P."/>
            <person name="Courtney L."/>
            <person name="Porwollik S."/>
            <person name="Ali J."/>
            <person name="Dante M."/>
            <person name="Du F."/>
            <person name="Hou S."/>
            <person name="Layman D."/>
            <person name="Leonard S."/>
            <person name="Nguyen C."/>
            <person name="Scott K."/>
            <person name="Holmes A."/>
            <person name="Grewal N."/>
            <person name="Mulvaney E."/>
            <person name="Ryan E."/>
            <person name="Sun H."/>
            <person name="Florea L."/>
            <person name="Miller W."/>
            <person name="Stoneking T."/>
            <person name="Nhan M."/>
            <person name="Waterston R."/>
            <person name="Wilson R.K."/>
        </authorList>
    </citation>
    <scope>NUCLEOTIDE SEQUENCE [LARGE SCALE GENOMIC DNA]</scope>
    <source>
        <strain>LT2 / SGSC1412 / ATCC 700720</strain>
    </source>
</reference>
<organism>
    <name type="scientific">Salmonella typhimurium (strain LT2 / SGSC1412 / ATCC 700720)</name>
    <dbReference type="NCBI Taxonomy" id="99287"/>
    <lineage>
        <taxon>Bacteria</taxon>
        <taxon>Pseudomonadati</taxon>
        <taxon>Pseudomonadota</taxon>
        <taxon>Gammaproteobacteria</taxon>
        <taxon>Enterobacterales</taxon>
        <taxon>Enterobacteriaceae</taxon>
        <taxon>Salmonella</taxon>
    </lineage>
</organism>
<evidence type="ECO:0000255" key="1">
    <source>
        <dbReference type="HAMAP-Rule" id="MF_00181"/>
    </source>
</evidence>